<proteinExistence type="inferred from homology"/>
<keyword id="KW-0046">Antibiotic resistance</keyword>
<keyword id="KW-1003">Cell membrane</keyword>
<keyword id="KW-0133">Cell shape</keyword>
<keyword id="KW-0961">Cell wall biogenesis/degradation</keyword>
<keyword id="KW-0378">Hydrolase</keyword>
<keyword id="KW-0472">Membrane</keyword>
<keyword id="KW-0573">Peptidoglycan synthesis</keyword>
<keyword id="KW-0812">Transmembrane</keyword>
<keyword id="KW-1133">Transmembrane helix</keyword>
<protein>
    <recommendedName>
        <fullName evidence="1">Undecaprenyl-diphosphatase</fullName>
        <ecNumber evidence="1">3.6.1.27</ecNumber>
    </recommendedName>
    <alternativeName>
        <fullName evidence="1">Bacitracin resistance protein</fullName>
    </alternativeName>
    <alternativeName>
        <fullName evidence="1">Undecaprenyl pyrophosphate phosphatase</fullName>
    </alternativeName>
</protein>
<reference key="1">
    <citation type="journal article" date="2009" name="BMC Genomics">
        <title>Genome evolution driven by host adaptations results in a more virulent and antimicrobial-resistant Streptococcus pneumoniae serotype 14.</title>
        <authorList>
            <person name="Ding F."/>
            <person name="Tang P."/>
            <person name="Hsu M.-H."/>
            <person name="Cui P."/>
            <person name="Hu S."/>
            <person name="Yu J."/>
            <person name="Chiu C.-H."/>
        </authorList>
    </citation>
    <scope>NUCLEOTIDE SEQUENCE [LARGE SCALE GENOMIC DNA]</scope>
    <source>
        <strain>CGSP14</strain>
    </source>
</reference>
<dbReference type="EC" id="3.6.1.27" evidence="1"/>
<dbReference type="EMBL" id="CP001033">
    <property type="protein sequence ID" value="ACB89704.1"/>
    <property type="molecule type" value="Genomic_DNA"/>
</dbReference>
<dbReference type="RefSeq" id="WP_000280773.1">
    <property type="nucleotide sequence ID" value="NC_010582.1"/>
</dbReference>
<dbReference type="SMR" id="B2IM77"/>
<dbReference type="KEGG" id="spw:SPCG_0452"/>
<dbReference type="HOGENOM" id="CLU_060296_2_0_9"/>
<dbReference type="GO" id="GO:0005886">
    <property type="term" value="C:plasma membrane"/>
    <property type="evidence" value="ECO:0007669"/>
    <property type="project" value="UniProtKB-SubCell"/>
</dbReference>
<dbReference type="GO" id="GO:0050380">
    <property type="term" value="F:undecaprenyl-diphosphatase activity"/>
    <property type="evidence" value="ECO:0007669"/>
    <property type="project" value="UniProtKB-UniRule"/>
</dbReference>
<dbReference type="GO" id="GO:0071555">
    <property type="term" value="P:cell wall organization"/>
    <property type="evidence" value="ECO:0007669"/>
    <property type="project" value="UniProtKB-KW"/>
</dbReference>
<dbReference type="GO" id="GO:0009252">
    <property type="term" value="P:peptidoglycan biosynthetic process"/>
    <property type="evidence" value="ECO:0007669"/>
    <property type="project" value="UniProtKB-KW"/>
</dbReference>
<dbReference type="GO" id="GO:0008360">
    <property type="term" value="P:regulation of cell shape"/>
    <property type="evidence" value="ECO:0007669"/>
    <property type="project" value="UniProtKB-KW"/>
</dbReference>
<dbReference type="GO" id="GO:0046677">
    <property type="term" value="P:response to antibiotic"/>
    <property type="evidence" value="ECO:0007669"/>
    <property type="project" value="UniProtKB-UniRule"/>
</dbReference>
<dbReference type="HAMAP" id="MF_01006">
    <property type="entry name" value="Undec_diphosphatase"/>
    <property type="match status" value="1"/>
</dbReference>
<dbReference type="InterPro" id="IPR003824">
    <property type="entry name" value="UppP"/>
</dbReference>
<dbReference type="NCBIfam" id="NF001391">
    <property type="entry name" value="PRK00281.1-5"/>
    <property type="match status" value="1"/>
</dbReference>
<dbReference type="PANTHER" id="PTHR30622">
    <property type="entry name" value="UNDECAPRENYL-DIPHOSPHATASE"/>
    <property type="match status" value="1"/>
</dbReference>
<dbReference type="PANTHER" id="PTHR30622:SF3">
    <property type="entry name" value="UNDECAPRENYL-DIPHOSPHATASE"/>
    <property type="match status" value="1"/>
</dbReference>
<dbReference type="Pfam" id="PF02673">
    <property type="entry name" value="BacA"/>
    <property type="match status" value="1"/>
</dbReference>
<comment type="function">
    <text evidence="1">Catalyzes the dephosphorylation of undecaprenyl diphosphate (UPP). Confers resistance to bacitracin.</text>
</comment>
<comment type="catalytic activity">
    <reaction evidence="1">
        <text>di-trans,octa-cis-undecaprenyl diphosphate + H2O = di-trans,octa-cis-undecaprenyl phosphate + phosphate + H(+)</text>
        <dbReference type="Rhea" id="RHEA:28094"/>
        <dbReference type="ChEBI" id="CHEBI:15377"/>
        <dbReference type="ChEBI" id="CHEBI:15378"/>
        <dbReference type="ChEBI" id="CHEBI:43474"/>
        <dbReference type="ChEBI" id="CHEBI:58405"/>
        <dbReference type="ChEBI" id="CHEBI:60392"/>
        <dbReference type="EC" id="3.6.1.27"/>
    </reaction>
</comment>
<comment type="subcellular location">
    <subcellularLocation>
        <location evidence="1">Cell membrane</location>
        <topology evidence="1">Multi-pass membrane protein</topology>
    </subcellularLocation>
</comment>
<comment type="miscellaneous">
    <text>Bacitracin is thought to be involved in the inhibition of peptidoglycan synthesis by sequestering undecaprenyl diphosphate, thereby reducing the pool of lipid carrier available.</text>
</comment>
<comment type="similarity">
    <text evidence="1">Belongs to the UppP family.</text>
</comment>
<name>UPPP_STRPS</name>
<sequence>MYLIEILKSIFFGIVEGITEWLPISSTGHLILAEEFIQYQNQNEAFMSMFNVVIQLGAILAVMVIYFNKLNPFKPTKDKQEVRKTWRLWLKVLIATLPLLGVFKFDDWFDTHFHNMVSVALMLIIYGVAFIYLEKRNKARAIEPSVTELDKLPYTTAFYIGLFQVLALLPGTSRSGATIVGGLLNGTSRSVVTEFTFYLGIPVMFGASALKIFKFVKAGELLSFGQLFLLLVAMGVAFAVSMVAIRFLTSYVKKHDFTLFGKYRIVLGSVLLLYSFVRLFV</sequence>
<organism>
    <name type="scientific">Streptococcus pneumoniae (strain CGSP14)</name>
    <dbReference type="NCBI Taxonomy" id="516950"/>
    <lineage>
        <taxon>Bacteria</taxon>
        <taxon>Bacillati</taxon>
        <taxon>Bacillota</taxon>
        <taxon>Bacilli</taxon>
        <taxon>Lactobacillales</taxon>
        <taxon>Streptococcaceae</taxon>
        <taxon>Streptococcus</taxon>
    </lineage>
</organism>
<accession>B2IM77</accession>
<feature type="chain" id="PRO_1000197410" description="Undecaprenyl-diphosphatase">
    <location>
        <begin position="1"/>
        <end position="281"/>
    </location>
</feature>
<feature type="transmembrane region" description="Helical" evidence="1">
    <location>
        <begin position="4"/>
        <end position="24"/>
    </location>
</feature>
<feature type="transmembrane region" description="Helical" evidence="1">
    <location>
        <begin position="45"/>
        <end position="65"/>
    </location>
</feature>
<feature type="transmembrane region" description="Helical" evidence="1">
    <location>
        <begin position="89"/>
        <end position="109"/>
    </location>
</feature>
<feature type="transmembrane region" description="Helical" evidence="1">
    <location>
        <begin position="113"/>
        <end position="133"/>
    </location>
</feature>
<feature type="transmembrane region" description="Helical" evidence="1">
    <location>
        <begin position="152"/>
        <end position="172"/>
    </location>
</feature>
<feature type="transmembrane region" description="Helical" evidence="1">
    <location>
        <begin position="190"/>
        <end position="210"/>
    </location>
</feature>
<feature type="transmembrane region" description="Helical" evidence="1">
    <location>
        <begin position="225"/>
        <end position="245"/>
    </location>
</feature>
<feature type="transmembrane region" description="Helical" evidence="1">
    <location>
        <begin position="257"/>
        <end position="277"/>
    </location>
</feature>
<gene>
    <name evidence="1" type="primary">uppP</name>
    <name type="ordered locus">SPCG_0452</name>
</gene>
<evidence type="ECO:0000255" key="1">
    <source>
        <dbReference type="HAMAP-Rule" id="MF_01006"/>
    </source>
</evidence>